<keyword id="KW-0030">Aminoacyl-tRNA synthetase</keyword>
<keyword id="KW-0067">ATP-binding</keyword>
<keyword id="KW-0963">Cytoplasm</keyword>
<keyword id="KW-0436">Ligase</keyword>
<keyword id="KW-0547">Nucleotide-binding</keyword>
<keyword id="KW-0648">Protein biosynthesis</keyword>
<keyword id="KW-1185">Reference proteome</keyword>
<organism>
    <name type="scientific">Coxiella burnetii (strain RSA 493 / Nine Mile phase I)</name>
    <dbReference type="NCBI Taxonomy" id="227377"/>
    <lineage>
        <taxon>Bacteria</taxon>
        <taxon>Pseudomonadati</taxon>
        <taxon>Pseudomonadota</taxon>
        <taxon>Gammaproteobacteria</taxon>
        <taxon>Legionellales</taxon>
        <taxon>Coxiellaceae</taxon>
        <taxon>Coxiella</taxon>
    </lineage>
</organism>
<sequence>MLDPKILRQNLEHVVEKLRRRGFEMDSDTFLQLENKRKEAQLAIQSFQTKRNQLSKTIGMAKSKGENPELLMAEVSQLNDELKQEEANFETIQKAFSDFQLAIPNLPHDSVPDGKSENDNREIRQWGAPPGFDFTPKDHTVLGERDNQLDFEAAAKLSGARFVVLRGSLARAHRALAQFMLDLHTDQHGYEEVYVPYLVHEECLYGTGQLPKFREEQFQVAGDRNFFLVPTGEVPLVNLARDEIIEAPALPKKWVAQTPCFRSEAGSYGKDVRGMIRQHQFQKVELVQLVQPENSYQALEEITRQAEKVLQLLALPYRVVELCAGDLGFAAAKTYDLEVWLPSQNKYREISSCSNCEDFQARRIQARWRNPKTGKPELLHTLNGSGLAVGRTLVAVMENYQQADGHIRVPDALKSYMGGVDYF</sequence>
<dbReference type="EC" id="6.1.1.11" evidence="1"/>
<dbReference type="EMBL" id="X75627">
    <property type="protein sequence ID" value="CAA53292.1"/>
    <property type="molecule type" value="Genomic_DNA"/>
</dbReference>
<dbReference type="EMBL" id="AE016828">
    <property type="protein sequence ID" value="AAO90697.1"/>
    <property type="molecule type" value="Genomic_DNA"/>
</dbReference>
<dbReference type="PIR" id="S43135">
    <property type="entry name" value="S43135"/>
</dbReference>
<dbReference type="RefSeq" id="NP_820183.1">
    <property type="nucleotide sequence ID" value="NC_002971.4"/>
</dbReference>
<dbReference type="RefSeq" id="WP_010958060.1">
    <property type="nucleotide sequence ID" value="NC_002971.4"/>
</dbReference>
<dbReference type="SMR" id="P39919"/>
<dbReference type="STRING" id="227377.CBU_1188"/>
<dbReference type="DNASU" id="1209092"/>
<dbReference type="EnsemblBacteria" id="AAO90697">
    <property type="protein sequence ID" value="AAO90697"/>
    <property type="gene ID" value="CBU_1188"/>
</dbReference>
<dbReference type="GeneID" id="1209092"/>
<dbReference type="KEGG" id="cbu:CBU_1188"/>
<dbReference type="PATRIC" id="fig|227377.7.peg.1186"/>
<dbReference type="eggNOG" id="COG0172">
    <property type="taxonomic scope" value="Bacteria"/>
</dbReference>
<dbReference type="HOGENOM" id="CLU_023797_1_1_6"/>
<dbReference type="OrthoDB" id="9804647at2"/>
<dbReference type="UniPathway" id="UPA00906">
    <property type="reaction ID" value="UER00895"/>
</dbReference>
<dbReference type="Proteomes" id="UP000002671">
    <property type="component" value="Chromosome"/>
</dbReference>
<dbReference type="GO" id="GO:0005737">
    <property type="term" value="C:cytoplasm"/>
    <property type="evidence" value="ECO:0007669"/>
    <property type="project" value="UniProtKB-SubCell"/>
</dbReference>
<dbReference type="GO" id="GO:0005524">
    <property type="term" value="F:ATP binding"/>
    <property type="evidence" value="ECO:0007669"/>
    <property type="project" value="UniProtKB-UniRule"/>
</dbReference>
<dbReference type="GO" id="GO:0004828">
    <property type="term" value="F:serine-tRNA ligase activity"/>
    <property type="evidence" value="ECO:0007669"/>
    <property type="project" value="UniProtKB-UniRule"/>
</dbReference>
<dbReference type="GO" id="GO:0016260">
    <property type="term" value="P:selenocysteine biosynthetic process"/>
    <property type="evidence" value="ECO:0007669"/>
    <property type="project" value="UniProtKB-UniRule"/>
</dbReference>
<dbReference type="GO" id="GO:0006434">
    <property type="term" value="P:seryl-tRNA aminoacylation"/>
    <property type="evidence" value="ECO:0007669"/>
    <property type="project" value="UniProtKB-UniRule"/>
</dbReference>
<dbReference type="CDD" id="cd00770">
    <property type="entry name" value="SerRS_core"/>
    <property type="match status" value="1"/>
</dbReference>
<dbReference type="Gene3D" id="3.30.930.10">
    <property type="entry name" value="Bira Bifunctional Protein, Domain 2"/>
    <property type="match status" value="1"/>
</dbReference>
<dbReference type="Gene3D" id="1.10.287.40">
    <property type="entry name" value="Serine-tRNA synthetase, tRNA binding domain"/>
    <property type="match status" value="1"/>
</dbReference>
<dbReference type="HAMAP" id="MF_00176">
    <property type="entry name" value="Ser_tRNA_synth_type1"/>
    <property type="match status" value="1"/>
</dbReference>
<dbReference type="InterPro" id="IPR002314">
    <property type="entry name" value="aa-tRNA-synt_IIb"/>
</dbReference>
<dbReference type="InterPro" id="IPR006195">
    <property type="entry name" value="aa-tRNA-synth_II"/>
</dbReference>
<dbReference type="InterPro" id="IPR045864">
    <property type="entry name" value="aa-tRNA-synth_II/BPL/LPL"/>
</dbReference>
<dbReference type="InterPro" id="IPR002317">
    <property type="entry name" value="Ser-tRNA-ligase_type_1"/>
</dbReference>
<dbReference type="InterPro" id="IPR015866">
    <property type="entry name" value="Ser-tRNA-synth_1_N"/>
</dbReference>
<dbReference type="InterPro" id="IPR042103">
    <property type="entry name" value="SerRS_1_N_sf"/>
</dbReference>
<dbReference type="InterPro" id="IPR033729">
    <property type="entry name" value="SerRS_core"/>
</dbReference>
<dbReference type="InterPro" id="IPR010978">
    <property type="entry name" value="tRNA-bd_arm"/>
</dbReference>
<dbReference type="NCBIfam" id="TIGR00414">
    <property type="entry name" value="serS"/>
    <property type="match status" value="1"/>
</dbReference>
<dbReference type="PANTHER" id="PTHR43697:SF1">
    <property type="entry name" value="SERINE--TRNA LIGASE"/>
    <property type="match status" value="1"/>
</dbReference>
<dbReference type="PANTHER" id="PTHR43697">
    <property type="entry name" value="SERYL-TRNA SYNTHETASE"/>
    <property type="match status" value="1"/>
</dbReference>
<dbReference type="Pfam" id="PF02403">
    <property type="entry name" value="Seryl_tRNA_N"/>
    <property type="match status" value="1"/>
</dbReference>
<dbReference type="Pfam" id="PF00587">
    <property type="entry name" value="tRNA-synt_2b"/>
    <property type="match status" value="1"/>
</dbReference>
<dbReference type="PIRSF" id="PIRSF001529">
    <property type="entry name" value="Ser-tRNA-synth_IIa"/>
    <property type="match status" value="1"/>
</dbReference>
<dbReference type="PRINTS" id="PR00981">
    <property type="entry name" value="TRNASYNTHSER"/>
</dbReference>
<dbReference type="SUPFAM" id="SSF55681">
    <property type="entry name" value="Class II aaRS and biotin synthetases"/>
    <property type="match status" value="1"/>
</dbReference>
<dbReference type="SUPFAM" id="SSF46589">
    <property type="entry name" value="tRNA-binding arm"/>
    <property type="match status" value="1"/>
</dbReference>
<dbReference type="PROSITE" id="PS50862">
    <property type="entry name" value="AA_TRNA_LIGASE_II"/>
    <property type="match status" value="1"/>
</dbReference>
<comment type="function">
    <text evidence="1">Catalyzes the attachment of serine to tRNA(Ser). Is also able to aminoacylate tRNA(Sec) with serine, to form the misacylated tRNA L-seryl-tRNA(Sec), which will be further converted into selenocysteinyl-tRNA(Sec).</text>
</comment>
<comment type="catalytic activity">
    <reaction evidence="1">
        <text>tRNA(Ser) + L-serine + ATP = L-seryl-tRNA(Ser) + AMP + diphosphate + H(+)</text>
        <dbReference type="Rhea" id="RHEA:12292"/>
        <dbReference type="Rhea" id="RHEA-COMP:9669"/>
        <dbReference type="Rhea" id="RHEA-COMP:9703"/>
        <dbReference type="ChEBI" id="CHEBI:15378"/>
        <dbReference type="ChEBI" id="CHEBI:30616"/>
        <dbReference type="ChEBI" id="CHEBI:33019"/>
        <dbReference type="ChEBI" id="CHEBI:33384"/>
        <dbReference type="ChEBI" id="CHEBI:78442"/>
        <dbReference type="ChEBI" id="CHEBI:78533"/>
        <dbReference type="ChEBI" id="CHEBI:456215"/>
        <dbReference type="EC" id="6.1.1.11"/>
    </reaction>
</comment>
<comment type="catalytic activity">
    <reaction evidence="1">
        <text>tRNA(Sec) + L-serine + ATP = L-seryl-tRNA(Sec) + AMP + diphosphate + H(+)</text>
        <dbReference type="Rhea" id="RHEA:42580"/>
        <dbReference type="Rhea" id="RHEA-COMP:9742"/>
        <dbReference type="Rhea" id="RHEA-COMP:10128"/>
        <dbReference type="ChEBI" id="CHEBI:15378"/>
        <dbReference type="ChEBI" id="CHEBI:30616"/>
        <dbReference type="ChEBI" id="CHEBI:33019"/>
        <dbReference type="ChEBI" id="CHEBI:33384"/>
        <dbReference type="ChEBI" id="CHEBI:78442"/>
        <dbReference type="ChEBI" id="CHEBI:78533"/>
        <dbReference type="ChEBI" id="CHEBI:456215"/>
        <dbReference type="EC" id="6.1.1.11"/>
    </reaction>
</comment>
<comment type="pathway">
    <text evidence="1">Aminoacyl-tRNA biosynthesis; selenocysteinyl-tRNA(Sec) biosynthesis; L-seryl-tRNA(Sec) from L-serine and tRNA(Sec): step 1/1.</text>
</comment>
<comment type="subunit">
    <text evidence="1">Homodimer. The tRNA molecule binds across the dimer.</text>
</comment>
<comment type="subcellular location">
    <subcellularLocation>
        <location evidence="1">Cytoplasm</location>
    </subcellularLocation>
</comment>
<comment type="domain">
    <text evidence="1">Consists of two distinct domains, a catalytic core and a N-terminal extension that is involved in tRNA binding.</text>
</comment>
<comment type="similarity">
    <text evidence="1">Belongs to the class-II aminoacyl-tRNA synthetase family. Type-1 seryl-tRNA synthetase subfamily.</text>
</comment>
<proteinExistence type="inferred from homology"/>
<evidence type="ECO:0000255" key="1">
    <source>
        <dbReference type="HAMAP-Rule" id="MF_00176"/>
    </source>
</evidence>
<accession>P39919</accession>
<protein>
    <recommendedName>
        <fullName evidence="1">Serine--tRNA ligase</fullName>
        <ecNumber evidence="1">6.1.1.11</ecNumber>
    </recommendedName>
    <alternativeName>
        <fullName evidence="1">Seryl-tRNA synthetase</fullName>
        <shortName evidence="1">SerRS</shortName>
    </alternativeName>
    <alternativeName>
        <fullName evidence="1">Seryl-tRNA(Ser/Sec) synthetase</fullName>
    </alternativeName>
</protein>
<gene>
    <name evidence="1" type="primary">serS</name>
    <name type="ordered locus">CBU_1188</name>
</gene>
<name>SYS_COXBU</name>
<reference key="1">
    <citation type="thesis" date="1994" institute="Justus Liebig University / Frankfurt" country="Germany">
        <authorList>
            <person name="Oswald W."/>
        </authorList>
    </citation>
    <scope>NUCLEOTIDE SEQUENCE [GENOMIC DNA]</scope>
    <source>
        <strain>Nine Mile phase I / Bratislava</strain>
    </source>
</reference>
<reference key="2">
    <citation type="journal article" date="2003" name="Proc. Natl. Acad. Sci. U.S.A.">
        <title>Complete genome sequence of the Q-fever pathogen, Coxiella burnetii.</title>
        <authorList>
            <person name="Seshadri R."/>
            <person name="Paulsen I.T."/>
            <person name="Eisen J.A."/>
            <person name="Read T.D."/>
            <person name="Nelson K.E."/>
            <person name="Nelson W.C."/>
            <person name="Ward N.L."/>
            <person name="Tettelin H."/>
            <person name="Davidsen T.M."/>
            <person name="Beanan M.J."/>
            <person name="DeBoy R.T."/>
            <person name="Daugherty S.C."/>
            <person name="Brinkac L.M."/>
            <person name="Madupu R."/>
            <person name="Dodson R.J."/>
            <person name="Khouri H.M."/>
            <person name="Lee K.H."/>
            <person name="Carty H.A."/>
            <person name="Scanlan D."/>
            <person name="Heinzen R.A."/>
            <person name="Thompson H.A."/>
            <person name="Samuel J.E."/>
            <person name="Fraser C.M."/>
            <person name="Heidelberg J.F."/>
        </authorList>
    </citation>
    <scope>NUCLEOTIDE SEQUENCE [LARGE SCALE GENOMIC DNA]</scope>
    <source>
        <strain>RSA 493 / Nine Mile phase I</strain>
    </source>
</reference>
<feature type="chain" id="PRO_0000122040" description="Serine--tRNA ligase">
    <location>
        <begin position="1"/>
        <end position="423"/>
    </location>
</feature>
<feature type="binding site" evidence="1">
    <location>
        <begin position="231"/>
        <end position="233"/>
    </location>
    <ligand>
        <name>L-serine</name>
        <dbReference type="ChEBI" id="CHEBI:33384"/>
    </ligand>
</feature>
<feature type="binding site" evidence="1">
    <location>
        <begin position="262"/>
        <end position="264"/>
    </location>
    <ligand>
        <name>ATP</name>
        <dbReference type="ChEBI" id="CHEBI:30616"/>
    </ligand>
</feature>
<feature type="binding site" evidence="1">
    <location>
        <position position="285"/>
    </location>
    <ligand>
        <name>L-serine</name>
        <dbReference type="ChEBI" id="CHEBI:33384"/>
    </ligand>
</feature>
<feature type="binding site" evidence="1">
    <location>
        <begin position="349"/>
        <end position="352"/>
    </location>
    <ligand>
        <name>ATP</name>
        <dbReference type="ChEBI" id="CHEBI:30616"/>
    </ligand>
</feature>
<feature type="binding site" evidence="1">
    <location>
        <position position="385"/>
    </location>
    <ligand>
        <name>L-serine</name>
        <dbReference type="ChEBI" id="CHEBI:33384"/>
    </ligand>
</feature>